<accession>A8Z2R1</accession>
<sequence>MRKRARIIYNPTSGKELFKRELPDALIKLEKAGYETSAYATEKIGDATLEAERAMHENYDVLIAAGGDGTLNEVVNGIAEKPNRPKLGVIPMGTVNDFGRALHIPNDIMGALDVIIEGHSTKVDIGKMNNRYFINLAAGGQLTQVSYETPSKLKSIVGPFAYYIKGFEMLPQMKAVDLRIEYDGNVFQGEALLFFLGLTNSMAGFEKLVPDAKLDDGYFTLIIVEKSNLAELGHIMTLASRGEHTKHPKVIYEKAKAINISSFTDLQLNVDGEYGGKLPANFLNLERHIDVFAPNDIVNEELINNDHVDDNLIEE</sequence>
<feature type="chain" id="PRO_0000386497" description="Diacylglycerol kinase">
    <location>
        <begin position="1"/>
        <end position="315"/>
    </location>
</feature>
<feature type="domain" description="DAGKc" evidence="2">
    <location>
        <begin position="1"/>
        <end position="132"/>
    </location>
</feature>
<feature type="active site" description="Proton acceptor" evidence="1">
    <location>
        <position position="273"/>
    </location>
</feature>
<feature type="binding site" evidence="2">
    <location>
        <begin position="10"/>
        <end position="14"/>
    </location>
    <ligand>
        <name>ATP</name>
        <dbReference type="ChEBI" id="CHEBI:30616"/>
    </ligand>
</feature>
<feature type="binding site" evidence="2">
    <location>
        <position position="41"/>
    </location>
    <ligand>
        <name>ATP</name>
        <dbReference type="ChEBI" id="CHEBI:30616"/>
    </ligand>
</feature>
<feature type="binding site" evidence="2">
    <location>
        <begin position="67"/>
        <end position="73"/>
    </location>
    <ligand>
        <name>ATP</name>
        <dbReference type="ChEBI" id="CHEBI:30616"/>
    </ligand>
</feature>
<feature type="binding site" evidence="2">
    <location>
        <position position="94"/>
    </location>
    <ligand>
        <name>ATP</name>
        <dbReference type="ChEBI" id="CHEBI:30616"/>
    </ligand>
</feature>
<feature type="binding site" evidence="1">
    <location>
        <position position="213"/>
    </location>
    <ligand>
        <name>Mg(2+)</name>
        <dbReference type="ChEBI" id="CHEBI:18420"/>
    </ligand>
</feature>
<feature type="binding site" evidence="1">
    <location>
        <position position="216"/>
    </location>
    <ligand>
        <name>Mg(2+)</name>
        <dbReference type="ChEBI" id="CHEBI:18420"/>
    </ligand>
</feature>
<feature type="binding site" evidence="1">
    <location>
        <position position="218"/>
    </location>
    <ligand>
        <name>Mg(2+)</name>
        <dbReference type="ChEBI" id="CHEBI:18420"/>
    </ligand>
</feature>
<protein>
    <recommendedName>
        <fullName>Diacylglycerol kinase</fullName>
        <shortName>DAG kinase</shortName>
        <shortName>DAGK</shortName>
        <ecNumber evidence="1">2.7.1.107</ecNumber>
    </recommendedName>
</protein>
<keyword id="KW-0067">ATP-binding</keyword>
<keyword id="KW-0418">Kinase</keyword>
<keyword id="KW-0444">Lipid biosynthesis</keyword>
<keyword id="KW-0443">Lipid metabolism</keyword>
<keyword id="KW-0460">Magnesium</keyword>
<keyword id="KW-0479">Metal-binding</keyword>
<keyword id="KW-0547">Nucleotide-binding</keyword>
<keyword id="KW-0594">Phospholipid biosynthesis</keyword>
<keyword id="KW-1208">Phospholipid metabolism</keyword>
<keyword id="KW-0808">Transferase</keyword>
<evidence type="ECO:0000250" key="1">
    <source>
        <dbReference type="UniProtKB" id="Q6GFF9"/>
    </source>
</evidence>
<evidence type="ECO:0000255" key="2">
    <source>
        <dbReference type="PROSITE-ProRule" id="PRU00783"/>
    </source>
</evidence>
<evidence type="ECO:0000305" key="3"/>
<proteinExistence type="inferred from homology"/>
<organism>
    <name type="scientific">Staphylococcus aureus (strain USA300 / TCH1516)</name>
    <dbReference type="NCBI Taxonomy" id="451516"/>
    <lineage>
        <taxon>Bacteria</taxon>
        <taxon>Bacillati</taxon>
        <taxon>Bacillota</taxon>
        <taxon>Bacilli</taxon>
        <taxon>Bacillales</taxon>
        <taxon>Staphylococcaceae</taxon>
        <taxon>Staphylococcus</taxon>
    </lineage>
</organism>
<gene>
    <name type="primary">dagK</name>
    <name type="ordered locus">USA300HOU_1897</name>
</gene>
<name>DAGK_STAAT</name>
<reference key="1">
    <citation type="journal article" date="2007" name="BMC Microbiol.">
        <title>Subtle genetic changes enhance virulence of methicillin resistant and sensitive Staphylococcus aureus.</title>
        <authorList>
            <person name="Highlander S.K."/>
            <person name="Hulten K.G."/>
            <person name="Qin X."/>
            <person name="Jiang H."/>
            <person name="Yerrapragada S."/>
            <person name="Mason E.O. Jr."/>
            <person name="Shang Y."/>
            <person name="Williams T.M."/>
            <person name="Fortunov R.M."/>
            <person name="Liu Y."/>
            <person name="Igboeli O."/>
            <person name="Petrosino J."/>
            <person name="Tirumalai M."/>
            <person name="Uzman A."/>
            <person name="Fox G.E."/>
            <person name="Cardenas A.M."/>
            <person name="Muzny D.M."/>
            <person name="Hemphill L."/>
            <person name="Ding Y."/>
            <person name="Dugan S."/>
            <person name="Blyth P.R."/>
            <person name="Buhay C.J."/>
            <person name="Dinh H.H."/>
            <person name="Hawes A.C."/>
            <person name="Holder M."/>
            <person name="Kovar C.L."/>
            <person name="Lee S.L."/>
            <person name="Liu W."/>
            <person name="Nazareth L.V."/>
            <person name="Wang Q."/>
            <person name="Zhou J."/>
            <person name="Kaplan S.L."/>
            <person name="Weinstock G.M."/>
        </authorList>
    </citation>
    <scope>NUCLEOTIDE SEQUENCE [LARGE SCALE GENOMIC DNA]</scope>
    <source>
        <strain>USA300 / TCH1516</strain>
    </source>
</reference>
<dbReference type="EC" id="2.7.1.107" evidence="1"/>
<dbReference type="EMBL" id="CP000730">
    <property type="protein sequence ID" value="ABX29900.1"/>
    <property type="molecule type" value="Genomic_DNA"/>
</dbReference>
<dbReference type="RefSeq" id="WP_001231451.1">
    <property type="nucleotide sequence ID" value="NC_010079.1"/>
</dbReference>
<dbReference type="SMR" id="A8Z2R1"/>
<dbReference type="KEGG" id="sax:USA300HOU_1897"/>
<dbReference type="HOGENOM" id="CLU_045532_1_0_9"/>
<dbReference type="GO" id="GO:0005886">
    <property type="term" value="C:plasma membrane"/>
    <property type="evidence" value="ECO:0007669"/>
    <property type="project" value="TreeGrafter"/>
</dbReference>
<dbReference type="GO" id="GO:0005524">
    <property type="term" value="F:ATP binding"/>
    <property type="evidence" value="ECO:0007669"/>
    <property type="project" value="UniProtKB-KW"/>
</dbReference>
<dbReference type="GO" id="GO:0004143">
    <property type="term" value="F:ATP-dependent diacylglycerol kinase activity"/>
    <property type="evidence" value="ECO:0007669"/>
    <property type="project" value="UniProtKB-EC"/>
</dbReference>
<dbReference type="GO" id="GO:0046872">
    <property type="term" value="F:metal ion binding"/>
    <property type="evidence" value="ECO:0007669"/>
    <property type="project" value="UniProtKB-KW"/>
</dbReference>
<dbReference type="GO" id="GO:0008654">
    <property type="term" value="P:phospholipid biosynthetic process"/>
    <property type="evidence" value="ECO:0007669"/>
    <property type="project" value="UniProtKB-KW"/>
</dbReference>
<dbReference type="FunFam" id="2.60.200.40:FF:000015">
    <property type="entry name" value="Diacylglycerol kinase"/>
    <property type="match status" value="1"/>
</dbReference>
<dbReference type="FunFam" id="3.40.50.10330:FF:000008">
    <property type="entry name" value="Probable lipid kinase YegS"/>
    <property type="match status" value="1"/>
</dbReference>
<dbReference type="Gene3D" id="2.60.200.40">
    <property type="match status" value="1"/>
</dbReference>
<dbReference type="Gene3D" id="3.40.50.10330">
    <property type="entry name" value="Probable inorganic polyphosphate/atp-NAD kinase, domain 1"/>
    <property type="match status" value="1"/>
</dbReference>
<dbReference type="InterPro" id="IPR017438">
    <property type="entry name" value="ATP-NAD_kinase_N"/>
</dbReference>
<dbReference type="InterPro" id="IPR005218">
    <property type="entry name" value="Diacylglycerol/lipid_kinase"/>
</dbReference>
<dbReference type="InterPro" id="IPR001206">
    <property type="entry name" value="Diacylglycerol_kinase_cat_dom"/>
</dbReference>
<dbReference type="InterPro" id="IPR050187">
    <property type="entry name" value="Lipid_Phosphate_FormReg"/>
</dbReference>
<dbReference type="InterPro" id="IPR016064">
    <property type="entry name" value="NAD/diacylglycerol_kinase_sf"/>
</dbReference>
<dbReference type="InterPro" id="IPR045540">
    <property type="entry name" value="YegS/DAGK_C"/>
</dbReference>
<dbReference type="NCBIfam" id="NF009603">
    <property type="entry name" value="PRK13055.1"/>
    <property type="match status" value="1"/>
</dbReference>
<dbReference type="NCBIfam" id="NF009874">
    <property type="entry name" value="PRK13337.1"/>
    <property type="match status" value="1"/>
</dbReference>
<dbReference type="NCBIfam" id="TIGR00147">
    <property type="entry name" value="YegS/Rv2252/BmrU family lipid kinase"/>
    <property type="match status" value="1"/>
</dbReference>
<dbReference type="PANTHER" id="PTHR12358:SF106">
    <property type="entry name" value="LIPID KINASE YEGS"/>
    <property type="match status" value="1"/>
</dbReference>
<dbReference type="PANTHER" id="PTHR12358">
    <property type="entry name" value="SPHINGOSINE KINASE"/>
    <property type="match status" value="1"/>
</dbReference>
<dbReference type="Pfam" id="PF00781">
    <property type="entry name" value="DAGK_cat"/>
    <property type="match status" value="1"/>
</dbReference>
<dbReference type="Pfam" id="PF19279">
    <property type="entry name" value="YegS_C"/>
    <property type="match status" value="1"/>
</dbReference>
<dbReference type="SMART" id="SM00046">
    <property type="entry name" value="DAGKc"/>
    <property type="match status" value="1"/>
</dbReference>
<dbReference type="SUPFAM" id="SSF111331">
    <property type="entry name" value="NAD kinase/diacylglycerol kinase-like"/>
    <property type="match status" value="1"/>
</dbReference>
<dbReference type="PROSITE" id="PS50146">
    <property type="entry name" value="DAGK"/>
    <property type="match status" value="1"/>
</dbReference>
<comment type="function">
    <text evidence="1">Catalyzes the phosphorylation of diacylglycerol (DAG) into phosphatidic acid. Is a key enzyme involved in the production of lipoteichoic acid by reintroducing DAG formed from the breakdown of membrane phospholipids into the phosphatidylglycerol biosynthetic pathway.</text>
</comment>
<comment type="catalytic activity">
    <reaction evidence="1">
        <text>a 1,2-diacyl-sn-glycerol + ATP = a 1,2-diacyl-sn-glycero-3-phosphate + ADP + H(+)</text>
        <dbReference type="Rhea" id="RHEA:10272"/>
        <dbReference type="ChEBI" id="CHEBI:15378"/>
        <dbReference type="ChEBI" id="CHEBI:17815"/>
        <dbReference type="ChEBI" id="CHEBI:30616"/>
        <dbReference type="ChEBI" id="CHEBI:58608"/>
        <dbReference type="ChEBI" id="CHEBI:456216"/>
        <dbReference type="EC" id="2.7.1.107"/>
    </reaction>
</comment>
<comment type="cofactor">
    <cofactor evidence="1">
        <name>Mg(2+)</name>
        <dbReference type="ChEBI" id="CHEBI:18420"/>
    </cofactor>
    <text evidence="1">Binds 1 Mg(2+) ion per subunit. This ion appears to have a structural role and is required for catalytic activity.</text>
</comment>
<comment type="subunit">
    <text evidence="1">Homodimer.</text>
</comment>
<comment type="similarity">
    <text evidence="3">Belongs to the diacylglycerol/lipid kinase family.</text>
</comment>